<protein>
    <recommendedName>
        <fullName>Transcriptional regulatory protein DcuR</fullName>
    </recommendedName>
</protein>
<comment type="function">
    <text evidence="1">Member of the two-component regulatory system DcuR/DcuS. Involved in the C4-dicarboxylate-stimulated regulation of the genes encoding the anaerobic fumarate respiratory system (frdABCD; nuoAN; dcuB; dcuC; sdhCDAB; etc.). Weakly regulates the aerobic C4-dicarboxylate transporter dctA (By similarity).</text>
</comment>
<comment type="subcellular location">
    <subcellularLocation>
        <location evidence="3">Cytoplasm</location>
    </subcellularLocation>
</comment>
<comment type="PTM">
    <text evidence="1">Phosphorylated and activated by DcuS.</text>
</comment>
<dbReference type="EMBL" id="AE005174">
    <property type="protein sequence ID" value="AAG59323.1"/>
    <property type="molecule type" value="Genomic_DNA"/>
</dbReference>
<dbReference type="EMBL" id="BA000007">
    <property type="protein sequence ID" value="BAB38529.1"/>
    <property type="molecule type" value="Genomic_DNA"/>
</dbReference>
<dbReference type="PIR" id="B91267">
    <property type="entry name" value="B91267"/>
</dbReference>
<dbReference type="PIR" id="G86107">
    <property type="entry name" value="G86107"/>
</dbReference>
<dbReference type="RefSeq" id="NP_313133.1">
    <property type="nucleotide sequence ID" value="NC_002695.1"/>
</dbReference>
<dbReference type="RefSeq" id="WP_000611288.1">
    <property type="nucleotide sequence ID" value="NZ_VOAI01000008.1"/>
</dbReference>
<dbReference type="SMR" id="P0AD02"/>
<dbReference type="STRING" id="155864.Z5726"/>
<dbReference type="GeneID" id="75203994"/>
<dbReference type="GeneID" id="914216"/>
<dbReference type="KEGG" id="ece:Z5726"/>
<dbReference type="KEGG" id="ecs:ECs_5106"/>
<dbReference type="PATRIC" id="fig|386585.9.peg.5336"/>
<dbReference type="eggNOG" id="COG4565">
    <property type="taxonomic scope" value="Bacteria"/>
</dbReference>
<dbReference type="HOGENOM" id="CLU_000445_39_0_6"/>
<dbReference type="OMA" id="ADAHVMY"/>
<dbReference type="Proteomes" id="UP000000558">
    <property type="component" value="Chromosome"/>
</dbReference>
<dbReference type="Proteomes" id="UP000002519">
    <property type="component" value="Chromosome"/>
</dbReference>
<dbReference type="GO" id="GO:0005737">
    <property type="term" value="C:cytoplasm"/>
    <property type="evidence" value="ECO:0007669"/>
    <property type="project" value="UniProtKB-SubCell"/>
</dbReference>
<dbReference type="GO" id="GO:0003677">
    <property type="term" value="F:DNA binding"/>
    <property type="evidence" value="ECO:0007669"/>
    <property type="project" value="UniProtKB-KW"/>
</dbReference>
<dbReference type="GO" id="GO:0003700">
    <property type="term" value="F:DNA-binding transcription factor activity"/>
    <property type="evidence" value="ECO:0007669"/>
    <property type="project" value="InterPro"/>
</dbReference>
<dbReference type="GO" id="GO:0000156">
    <property type="term" value="F:phosphorelay response regulator activity"/>
    <property type="evidence" value="ECO:0007669"/>
    <property type="project" value="TreeGrafter"/>
</dbReference>
<dbReference type="CDD" id="cd19925">
    <property type="entry name" value="REC_citrate_TCS"/>
    <property type="match status" value="1"/>
</dbReference>
<dbReference type="Gene3D" id="3.40.50.2300">
    <property type="match status" value="1"/>
</dbReference>
<dbReference type="InterPro" id="IPR051271">
    <property type="entry name" value="2C-system_Tx_regulators"/>
</dbReference>
<dbReference type="InterPro" id="IPR011006">
    <property type="entry name" value="CheY-like_superfamily"/>
</dbReference>
<dbReference type="InterPro" id="IPR024187">
    <property type="entry name" value="Sig_transdc_resp-reg_cit/mal"/>
</dbReference>
<dbReference type="InterPro" id="IPR001789">
    <property type="entry name" value="Sig_transdc_resp-reg_receiver"/>
</dbReference>
<dbReference type="NCBIfam" id="NF007750">
    <property type="entry name" value="PRK10430.1"/>
    <property type="match status" value="1"/>
</dbReference>
<dbReference type="PANTHER" id="PTHR45526:SF1">
    <property type="entry name" value="TRANSCRIPTIONAL REGULATORY PROTEIN DCUR-RELATED"/>
    <property type="match status" value="1"/>
</dbReference>
<dbReference type="PANTHER" id="PTHR45526">
    <property type="entry name" value="TRANSCRIPTIONAL REGULATORY PROTEIN DPIA"/>
    <property type="match status" value="1"/>
</dbReference>
<dbReference type="Pfam" id="PF00072">
    <property type="entry name" value="Response_reg"/>
    <property type="match status" value="1"/>
</dbReference>
<dbReference type="PIRSF" id="PIRSF006171">
    <property type="entry name" value="RR_citrat_malat"/>
    <property type="match status" value="1"/>
</dbReference>
<dbReference type="SMART" id="SM00448">
    <property type="entry name" value="REC"/>
    <property type="match status" value="1"/>
</dbReference>
<dbReference type="SUPFAM" id="SSF52172">
    <property type="entry name" value="CheY-like"/>
    <property type="match status" value="1"/>
</dbReference>
<dbReference type="PROSITE" id="PS50110">
    <property type="entry name" value="RESPONSE_REGULATORY"/>
    <property type="match status" value="1"/>
</dbReference>
<gene>
    <name type="primary">dcuR</name>
    <name type="ordered locus">Z5726</name>
    <name type="ordered locus">ECs5106</name>
</gene>
<feature type="chain" id="PRO_0000081095" description="Transcriptional regulatory protein DcuR">
    <location>
        <begin position="1"/>
        <end position="239"/>
    </location>
</feature>
<feature type="domain" description="Response regulatory" evidence="2">
    <location>
        <begin position="3"/>
        <end position="121"/>
    </location>
</feature>
<feature type="DNA-binding region" description="H-T-H motif" evidence="1">
    <location>
        <begin position="181"/>
        <end position="200"/>
    </location>
</feature>
<feature type="modified residue" description="4-aspartylphosphate" evidence="2">
    <location>
        <position position="56"/>
    </location>
</feature>
<proteinExistence type="inferred from homology"/>
<reference key="1">
    <citation type="journal article" date="2001" name="Nature">
        <title>Genome sequence of enterohaemorrhagic Escherichia coli O157:H7.</title>
        <authorList>
            <person name="Perna N.T."/>
            <person name="Plunkett G. III"/>
            <person name="Burland V."/>
            <person name="Mau B."/>
            <person name="Glasner J.D."/>
            <person name="Rose D.J."/>
            <person name="Mayhew G.F."/>
            <person name="Evans P.S."/>
            <person name="Gregor J."/>
            <person name="Kirkpatrick H.A."/>
            <person name="Posfai G."/>
            <person name="Hackett J."/>
            <person name="Klink S."/>
            <person name="Boutin A."/>
            <person name="Shao Y."/>
            <person name="Miller L."/>
            <person name="Grotbeck E.J."/>
            <person name="Davis N.W."/>
            <person name="Lim A."/>
            <person name="Dimalanta E.T."/>
            <person name="Potamousis K."/>
            <person name="Apodaca J."/>
            <person name="Anantharaman T.S."/>
            <person name="Lin J."/>
            <person name="Yen G."/>
            <person name="Schwartz D.C."/>
            <person name="Welch R.A."/>
            <person name="Blattner F.R."/>
        </authorList>
    </citation>
    <scope>NUCLEOTIDE SEQUENCE [LARGE SCALE GENOMIC DNA]</scope>
    <source>
        <strain>O157:H7 / EDL933 / ATCC 700927 / EHEC</strain>
    </source>
</reference>
<reference key="2">
    <citation type="journal article" date="2001" name="DNA Res.">
        <title>Complete genome sequence of enterohemorrhagic Escherichia coli O157:H7 and genomic comparison with a laboratory strain K-12.</title>
        <authorList>
            <person name="Hayashi T."/>
            <person name="Makino K."/>
            <person name="Ohnishi M."/>
            <person name="Kurokawa K."/>
            <person name="Ishii K."/>
            <person name="Yokoyama K."/>
            <person name="Han C.-G."/>
            <person name="Ohtsubo E."/>
            <person name="Nakayama K."/>
            <person name="Murata T."/>
            <person name="Tanaka M."/>
            <person name="Tobe T."/>
            <person name="Iida T."/>
            <person name="Takami H."/>
            <person name="Honda T."/>
            <person name="Sasakawa C."/>
            <person name="Ogasawara N."/>
            <person name="Yasunaga T."/>
            <person name="Kuhara S."/>
            <person name="Shiba T."/>
            <person name="Hattori M."/>
            <person name="Shinagawa H."/>
        </authorList>
    </citation>
    <scope>NUCLEOTIDE SEQUENCE [LARGE SCALE GENOMIC DNA]</scope>
    <source>
        <strain>O157:H7 / Sakai / RIMD 0509952 / EHEC</strain>
    </source>
</reference>
<accession>P0AD02</accession>
<accession>P39271</accession>
<accession>P76794</accession>
<name>DCUR_ECO57</name>
<sequence>MINVLIIDDDAMVAELNRRYVAQIPGFQCCGTASTLEKAKEIIFNSDTPIDLILLDIYMQKENGLDLLPVLHNARCKSDVIVISSAADAATIKDSLHYGVVDYLIKPFQASRFEEALTGWRQKKMALEKHQYYDQAELDQLIHGSSSNEQDPRRLPKGLTPQTLRTLCQWIDAHQDYEFSTDELANEVNISRVSCRKYLIWLVNCHILFTSIHYGVTGRPVYRYRIQAEHYSLLKQYCQ</sequence>
<organism>
    <name type="scientific">Escherichia coli O157:H7</name>
    <dbReference type="NCBI Taxonomy" id="83334"/>
    <lineage>
        <taxon>Bacteria</taxon>
        <taxon>Pseudomonadati</taxon>
        <taxon>Pseudomonadota</taxon>
        <taxon>Gammaproteobacteria</taxon>
        <taxon>Enterobacterales</taxon>
        <taxon>Enterobacteriaceae</taxon>
        <taxon>Escherichia</taxon>
    </lineage>
</organism>
<keyword id="KW-0010">Activator</keyword>
<keyword id="KW-0963">Cytoplasm</keyword>
<keyword id="KW-0238">DNA-binding</keyword>
<keyword id="KW-0597">Phosphoprotein</keyword>
<keyword id="KW-1185">Reference proteome</keyword>
<keyword id="KW-0804">Transcription</keyword>
<keyword id="KW-0805">Transcription regulation</keyword>
<keyword id="KW-0902">Two-component regulatory system</keyword>
<evidence type="ECO:0000250" key="1"/>
<evidence type="ECO:0000255" key="2">
    <source>
        <dbReference type="PROSITE-ProRule" id="PRU00169"/>
    </source>
</evidence>
<evidence type="ECO:0000305" key="3"/>